<accession>Q6G600</accession>
<organism>
    <name type="scientific">Staphylococcus aureus (strain MSSA476)</name>
    <dbReference type="NCBI Taxonomy" id="282459"/>
    <lineage>
        <taxon>Bacteria</taxon>
        <taxon>Bacillati</taxon>
        <taxon>Bacillota</taxon>
        <taxon>Bacilli</taxon>
        <taxon>Bacillales</taxon>
        <taxon>Staphylococcaceae</taxon>
        <taxon>Staphylococcus</taxon>
    </lineage>
</organism>
<evidence type="ECO:0000255" key="1">
    <source>
        <dbReference type="HAMAP-Rule" id="MF_00278"/>
    </source>
</evidence>
<comment type="function">
    <text evidence="1">IGPS catalyzes the conversion of PRFAR and glutamine to IGP, AICAR and glutamate. The HisH subunit catalyzes the hydrolysis of glutamine to glutamate and ammonia as part of the synthesis of IGP and AICAR. The resulting ammonia molecule is channeled to the active site of HisF.</text>
</comment>
<comment type="catalytic activity">
    <reaction evidence="1">
        <text>5-[(5-phospho-1-deoxy-D-ribulos-1-ylimino)methylamino]-1-(5-phospho-beta-D-ribosyl)imidazole-4-carboxamide + L-glutamine = D-erythro-1-(imidazol-4-yl)glycerol 3-phosphate + 5-amino-1-(5-phospho-beta-D-ribosyl)imidazole-4-carboxamide + L-glutamate + H(+)</text>
        <dbReference type="Rhea" id="RHEA:24793"/>
        <dbReference type="ChEBI" id="CHEBI:15378"/>
        <dbReference type="ChEBI" id="CHEBI:29985"/>
        <dbReference type="ChEBI" id="CHEBI:58278"/>
        <dbReference type="ChEBI" id="CHEBI:58359"/>
        <dbReference type="ChEBI" id="CHEBI:58475"/>
        <dbReference type="ChEBI" id="CHEBI:58525"/>
        <dbReference type="EC" id="4.3.2.10"/>
    </reaction>
</comment>
<comment type="catalytic activity">
    <reaction evidence="1">
        <text>L-glutamine + H2O = L-glutamate + NH4(+)</text>
        <dbReference type="Rhea" id="RHEA:15889"/>
        <dbReference type="ChEBI" id="CHEBI:15377"/>
        <dbReference type="ChEBI" id="CHEBI:28938"/>
        <dbReference type="ChEBI" id="CHEBI:29985"/>
        <dbReference type="ChEBI" id="CHEBI:58359"/>
        <dbReference type="EC" id="3.5.1.2"/>
    </reaction>
</comment>
<comment type="pathway">
    <text evidence="1">Amino-acid biosynthesis; L-histidine biosynthesis; L-histidine from 5-phospho-alpha-D-ribose 1-diphosphate: step 5/9.</text>
</comment>
<comment type="subunit">
    <text evidence="1">Heterodimer of HisH and HisF.</text>
</comment>
<comment type="subcellular location">
    <subcellularLocation>
        <location evidence="1">Cytoplasm</location>
    </subcellularLocation>
</comment>
<name>HIS5_STAAS</name>
<dbReference type="EC" id="4.3.2.10" evidence="1"/>
<dbReference type="EC" id="3.5.1.2" evidence="1"/>
<dbReference type="EMBL" id="BX571857">
    <property type="protein sequence ID" value="CAG44377.1"/>
    <property type="molecule type" value="Genomic_DNA"/>
</dbReference>
<dbReference type="RefSeq" id="WP_000635623.1">
    <property type="nucleotide sequence ID" value="NC_002953.3"/>
</dbReference>
<dbReference type="SMR" id="Q6G600"/>
<dbReference type="KEGG" id="sas:SAS2560"/>
<dbReference type="HOGENOM" id="CLU_071837_2_2_9"/>
<dbReference type="UniPathway" id="UPA00031">
    <property type="reaction ID" value="UER00010"/>
</dbReference>
<dbReference type="GO" id="GO:0005737">
    <property type="term" value="C:cytoplasm"/>
    <property type="evidence" value="ECO:0007669"/>
    <property type="project" value="UniProtKB-SubCell"/>
</dbReference>
<dbReference type="GO" id="GO:0004359">
    <property type="term" value="F:glutaminase activity"/>
    <property type="evidence" value="ECO:0007669"/>
    <property type="project" value="UniProtKB-EC"/>
</dbReference>
<dbReference type="GO" id="GO:0000107">
    <property type="term" value="F:imidazoleglycerol-phosphate synthase activity"/>
    <property type="evidence" value="ECO:0007669"/>
    <property type="project" value="UniProtKB-UniRule"/>
</dbReference>
<dbReference type="GO" id="GO:0016829">
    <property type="term" value="F:lyase activity"/>
    <property type="evidence" value="ECO:0007669"/>
    <property type="project" value="UniProtKB-KW"/>
</dbReference>
<dbReference type="GO" id="GO:0000105">
    <property type="term" value="P:L-histidine biosynthetic process"/>
    <property type="evidence" value="ECO:0007669"/>
    <property type="project" value="UniProtKB-UniRule"/>
</dbReference>
<dbReference type="CDD" id="cd01748">
    <property type="entry name" value="GATase1_IGP_Synthase"/>
    <property type="match status" value="1"/>
</dbReference>
<dbReference type="FunFam" id="3.40.50.880:FF:000064">
    <property type="entry name" value="Imidazole glycerol phosphate synthase subunit HisH"/>
    <property type="match status" value="1"/>
</dbReference>
<dbReference type="Gene3D" id="3.40.50.880">
    <property type="match status" value="1"/>
</dbReference>
<dbReference type="HAMAP" id="MF_00278">
    <property type="entry name" value="HisH"/>
    <property type="match status" value="1"/>
</dbReference>
<dbReference type="InterPro" id="IPR029062">
    <property type="entry name" value="Class_I_gatase-like"/>
</dbReference>
<dbReference type="InterPro" id="IPR017926">
    <property type="entry name" value="GATASE"/>
</dbReference>
<dbReference type="InterPro" id="IPR010139">
    <property type="entry name" value="Imidazole-glycPsynth_HisH"/>
</dbReference>
<dbReference type="NCBIfam" id="TIGR01855">
    <property type="entry name" value="IMP_synth_hisH"/>
    <property type="match status" value="1"/>
</dbReference>
<dbReference type="PANTHER" id="PTHR42701">
    <property type="entry name" value="IMIDAZOLE GLYCEROL PHOSPHATE SYNTHASE SUBUNIT HISH"/>
    <property type="match status" value="1"/>
</dbReference>
<dbReference type="PANTHER" id="PTHR42701:SF1">
    <property type="entry name" value="IMIDAZOLE GLYCEROL PHOSPHATE SYNTHASE SUBUNIT HISH"/>
    <property type="match status" value="1"/>
</dbReference>
<dbReference type="Pfam" id="PF00117">
    <property type="entry name" value="GATase"/>
    <property type="match status" value="1"/>
</dbReference>
<dbReference type="PIRSF" id="PIRSF000495">
    <property type="entry name" value="Amidotransf_hisH"/>
    <property type="match status" value="1"/>
</dbReference>
<dbReference type="SUPFAM" id="SSF52317">
    <property type="entry name" value="Class I glutamine amidotransferase-like"/>
    <property type="match status" value="1"/>
</dbReference>
<dbReference type="PROSITE" id="PS51273">
    <property type="entry name" value="GATASE_TYPE_1"/>
    <property type="match status" value="1"/>
</dbReference>
<keyword id="KW-0028">Amino-acid biosynthesis</keyword>
<keyword id="KW-0963">Cytoplasm</keyword>
<keyword id="KW-0315">Glutamine amidotransferase</keyword>
<keyword id="KW-0368">Histidine biosynthesis</keyword>
<keyword id="KW-0378">Hydrolase</keyword>
<keyword id="KW-0456">Lyase</keyword>
<protein>
    <recommendedName>
        <fullName evidence="1">Imidazole glycerol phosphate synthase subunit HisH</fullName>
        <ecNumber evidence="1">4.3.2.10</ecNumber>
    </recommendedName>
    <alternativeName>
        <fullName evidence="1">IGP synthase glutaminase subunit</fullName>
        <ecNumber evidence="1">3.5.1.2</ecNumber>
    </alternativeName>
    <alternativeName>
        <fullName evidence="1">IGP synthase subunit HisH</fullName>
    </alternativeName>
    <alternativeName>
        <fullName evidence="1">ImGP synthase subunit HisH</fullName>
        <shortName evidence="1">IGPS subunit HisH</shortName>
    </alternativeName>
</protein>
<gene>
    <name evidence="1" type="primary">hisH</name>
    <name type="ordered locus">SAS2560</name>
</gene>
<feature type="chain" id="PRO_0000152426" description="Imidazole glycerol phosphate synthase subunit HisH">
    <location>
        <begin position="1"/>
        <end position="192"/>
    </location>
</feature>
<feature type="domain" description="Glutamine amidotransferase type-1" evidence="1">
    <location>
        <begin position="1"/>
        <end position="192"/>
    </location>
</feature>
<feature type="active site" description="Nucleophile" evidence="1">
    <location>
        <position position="77"/>
    </location>
</feature>
<feature type="active site" evidence="1">
    <location>
        <position position="169"/>
    </location>
</feature>
<feature type="active site" evidence="1">
    <location>
        <position position="171"/>
    </location>
</feature>
<reference key="1">
    <citation type="journal article" date="2004" name="Proc. Natl. Acad. Sci. U.S.A.">
        <title>Complete genomes of two clinical Staphylococcus aureus strains: evidence for the rapid evolution of virulence and drug resistance.</title>
        <authorList>
            <person name="Holden M.T.G."/>
            <person name="Feil E.J."/>
            <person name="Lindsay J.A."/>
            <person name="Peacock S.J."/>
            <person name="Day N.P.J."/>
            <person name="Enright M.C."/>
            <person name="Foster T.J."/>
            <person name="Moore C.E."/>
            <person name="Hurst L."/>
            <person name="Atkin R."/>
            <person name="Barron A."/>
            <person name="Bason N."/>
            <person name="Bentley S.D."/>
            <person name="Chillingworth C."/>
            <person name="Chillingworth T."/>
            <person name="Churcher C."/>
            <person name="Clark L."/>
            <person name="Corton C."/>
            <person name="Cronin A."/>
            <person name="Doggett J."/>
            <person name="Dowd L."/>
            <person name="Feltwell T."/>
            <person name="Hance Z."/>
            <person name="Harris B."/>
            <person name="Hauser H."/>
            <person name="Holroyd S."/>
            <person name="Jagels K."/>
            <person name="James K.D."/>
            <person name="Lennard N."/>
            <person name="Line A."/>
            <person name="Mayes R."/>
            <person name="Moule S."/>
            <person name="Mungall K."/>
            <person name="Ormond D."/>
            <person name="Quail M.A."/>
            <person name="Rabbinowitsch E."/>
            <person name="Rutherford K.M."/>
            <person name="Sanders M."/>
            <person name="Sharp S."/>
            <person name="Simmonds M."/>
            <person name="Stevens K."/>
            <person name="Whitehead S."/>
            <person name="Barrell B.G."/>
            <person name="Spratt B.G."/>
            <person name="Parkhill J."/>
        </authorList>
    </citation>
    <scope>NUCLEOTIDE SEQUENCE [LARGE SCALE GENOMIC DNA]</scope>
    <source>
        <strain>MSSA476</strain>
    </source>
</reference>
<proteinExistence type="inferred from homology"/>
<sequence length="192" mass="21279">MIVIVDYGLGNISNVKRAIEHLGYEVVVSNTSKIIDQAETIILPGVGHFKDAMSEIKRLNLNAILAKNTDKKMIGICLGMQLMYEHSDEGDASGLGFIPGNISRIQTEYPVPHLGWNNLVSKHPMLNQDVYFVHSYQAPMSENVIAYAQYGADIPAIVQFNNYIGIQFHPEKSGTYGLQILRQAIQGGFIND</sequence>